<reference key="1">
    <citation type="journal article" date="2013" name="Genome Announc.">
        <title>Genome sequence of the basidiomycetous yeast Pseudozyma antarctica T-34, a producer of the glycolipid biosurfactants mannosylerythritol lipids.</title>
        <authorList>
            <person name="Morita T."/>
            <person name="Koike H."/>
            <person name="Koyama Y."/>
            <person name="Hagiwara H."/>
            <person name="Ito E."/>
            <person name="Fukuoka T."/>
            <person name="Imura T."/>
            <person name="Machida M."/>
            <person name="Kitamoto D."/>
        </authorList>
    </citation>
    <scope>NUCLEOTIDE SEQUENCE [LARGE SCALE GENOMIC DNA]</scope>
    <scope>IDENTIFICATION</scope>
    <scope>FUNCTION</scope>
    <source>
        <strain>T-34</strain>
    </source>
</reference>
<reference key="2">
    <citation type="journal article" date="2010" name="Yeast">
        <title>Identification of the gene PaEMT1 for biosynthesis of mannosylerythritol lipids in the basidiomycetous yeast Pseudozyma antarctica.</title>
        <authorList>
            <person name="Morita T."/>
            <person name="Ito E."/>
            <person name="Kitamoto H.K."/>
            <person name="Takegawa K."/>
            <person name="Fukuoka T."/>
            <person name="Imura T."/>
            <person name="Kitamoto D."/>
        </authorList>
    </citation>
    <scope>NUCLEOTIDE SEQUENCE [GENOMIC DNA] OF 23-617</scope>
    <scope>FUNCTION</scope>
    <scope>DISRUPTION PHENOTYPE</scope>
    <scope>CATALYTIC ACTIVITY</scope>
</reference>
<reference key="3">
    <citation type="journal article" date="2002" name="J. Biosci. Bioeng.">
        <title>Functions and potential applications of glycolipid biosurfactants--from energy-saving materials to gene delivery carriers.</title>
        <authorList>
            <person name="Kitamoto D."/>
            <person name="Isoda H."/>
            <person name="Nakahara T."/>
        </authorList>
    </citation>
    <scope>BIOTECHNOLOGY</scope>
</reference>
<reference key="4">
    <citation type="journal article" date="2007" name="Colloids Surf. B Biointerfaces">
        <title>Kinetic studies on the interactions between glycolipid biosurfactant assembled monolayers and various classes of immunoglobulins using surface plasmon resonance.</title>
        <authorList>
            <person name="Ito S."/>
            <person name="Imura T."/>
            <person name="Fukuoka T."/>
            <person name="Morita T."/>
            <person name="Sakai H."/>
            <person name="Abe M."/>
            <person name="Kitamoto D."/>
        </authorList>
    </citation>
    <scope>BIOTECHNOLOGY</scope>
</reference>
<reference key="5">
    <citation type="journal article" date="2007" name="Langmuir">
        <title>Aqueous-phase behavior of natural glycolipid biosurfactant mannosylerythritol lipid A: sponge, cubic, and lamellar phases.</title>
        <authorList>
            <person name="Imura T."/>
            <person name="Hikosaka Y."/>
            <person name="Worakitkanchanakul W."/>
            <person name="Sakai H."/>
            <person name="Abe M."/>
            <person name="Konishi M."/>
            <person name="Minamikawa H."/>
            <person name="Kitamoto D."/>
        </authorList>
    </citation>
    <scope>BIOTECHNOLOGY</scope>
</reference>
<reference key="6">
    <citation type="journal article" date="2009" name="Biotechnol. Appl. Biochem.">
        <title>Production of glycolipid biosurfactants by basidiomycetous yeasts.</title>
        <authorList>
            <person name="Morita T."/>
            <person name="Fukuoka T."/>
            <person name="Imura T."/>
            <person name="Kitamoto D."/>
        </authorList>
    </citation>
    <scope>BIOTECHNOLOGY</scope>
</reference>
<reference key="7">
    <citation type="journal article" date="2009" name="Curr. Opin. Colloid Interface Sci.">
        <title>Self-assembling properties of glycolipid biosurfactants and their potential applications.</title>
        <authorList>
            <person name="Kitamoto D."/>
            <person name="Morita T."/>
            <person name="Fukuoka T."/>
            <person name="Konishi M."/>
            <person name="Imura T."/>
        </authorList>
    </citation>
    <scope>BIOTECHNOLOGY</scope>
</reference>
<reference key="8">
    <citation type="journal article" date="2020" name="PLoS ONE">
        <title>Targeted transcriptomic study of the implication of central metabolic pathways in mannosylerythritol lipids biosynthesis in Pseudozyma antarctica T-34.</title>
        <authorList>
            <person name="Wada K."/>
            <person name="Koike H."/>
            <person name="Fujii T."/>
            <person name="Morita T."/>
        </authorList>
    </citation>
    <scope>FUNCTION</scope>
    <scope>INDUCTION</scope>
    <scope>PATHWAY</scope>
</reference>
<accession>M9MH90</accession>
<accession>D3KZ17</accession>
<sequence>MKIALLANPARGEINVLLATAYELIRLGHEVVFLTGSSFRNAIAEFKDEQNDKLLASRIQFSDLGTAKAFEDFTRGMQSHLKGLRKPPGDYSSMEICQIVALVTEQEFREAATLVRDRLLELDPDMIAVDALSPNLVTGCRMTGLPWMFTVPCSPSLTATRKSLFDPHPMGSRRQRTLMSALENLKLTIRETYGNAIKKDLYARRALLKKEFGLNSMGFNADSAIVPPLWKDRNCVGGIHFNTPGLWDSIRQPHQITFVGCGVTSDPENHSPSQAGTPISEIAGWSPLTKLSTSFDQSGQGERDLDVEWMDAAYAAGESVVYLNMGSMFLWTDDEVRACLRAFERLHRESGGKIKLLFKLNKPKRNPGSPGFTSPLNSPTAVATPKWDEKRPIDSRRPSGVSTLIMAEKLSEAIKNVKPRRKTDAEKGYSQFMLSEFEGLEYVRFTRWVHDQRRIYKHPALRVVIHHGGGNSFNEAVHYGLPQMILSQWFDTHEYAILAERFGIGLRSKHAPFVDEQDMFAKMLRLLRGPEAEKIQANAKIWSTRSRNAGGAPAAARLLETHALLHRQRKQARDPTPTAKTSLSVDTTEVATPTFTDTETSLSPKILSSAASTVTNP</sequence>
<keyword id="KW-0328">Glycosyltransferase</keyword>
<keyword id="KW-1185">Reference proteome</keyword>
<keyword id="KW-0808">Transferase</keyword>
<organism>
    <name type="scientific">Pseudozyma antarctica (strain T-34)</name>
    <name type="common">Yeast</name>
    <name type="synonym">Candida antarctica</name>
    <dbReference type="NCBI Taxonomy" id="1151754"/>
    <lineage>
        <taxon>Eukaryota</taxon>
        <taxon>Fungi</taxon>
        <taxon>Dikarya</taxon>
        <taxon>Basidiomycota</taxon>
        <taxon>Ustilaginomycotina</taxon>
        <taxon>Ustilaginomycetes</taxon>
        <taxon>Ustilaginales</taxon>
        <taxon>Ustilaginaceae</taxon>
        <taxon>Moesziomyces</taxon>
    </lineage>
</organism>
<comment type="function">
    <text evidence="1 7 8 13 14">Glycosyltransferase; part of the gene cluster that mediates the biosynthesis of mannosylerythritol lipids (MELs), surface-active substances that enhance the availability of water-insoluble substrates (Probable) (PubMed:20564650, PubMed:31923270). Depending on the number of acetyl groups, mannosylerythritol lipids can be differentiated into MEL A (fully acetylated), MEL B and MEL C (monoacetylated at R-6 and R-4, respectively), and the fully deacetylated MEL D (By similarity). The first step in the pathway is the generation of mannosylerythritol by the glycosyltransferase EMT1 which catalyzes the transfer of GDP-mannose to the C-4 atom of meso-erythritol (PubMed:20564650). This reaction has to be stereospecific, since only mannosyl-D-erythritol is generated (Probable). The produced disaccharide is subsequently acylated with fatty acids of various lengths by the acyltransferases MAC1 and MAC2 at positions C-2 and C-3, repectively (Probable). The existence of MEL derivatives which carry an acetyl group at C-2 implies that at least MAC1 also accepts acetyl-CoA as a donor (Probable). The final step of MEL biosynthesis is the acetylation of the fully acylated mannosylerythritol lipids catalyzed by the acetyl-CoA-dependent acetyltransferase MAT1 (Probable). MAT1 displays a relaxed regioselectivity and is able to transfer acetylgroups to both positions C-4 and C-6 of the mannosyl moiety (Probable).</text>
</comment>
<comment type="pathway">
    <text evidence="8">Secondary metabolite biosynthesis.</text>
</comment>
<comment type="induction">
    <text evidence="8">Expression is induced when cells are grown in cultures containing vegetable oil as the carbon source.</text>
</comment>
<comment type="disruption phenotype">
    <text evidence="7">Impairs the production of mannosylerythritol lipids (MELs) (PubMed:20564650). Leads to low-temperature sensitivity and affect the cell morphology by impairing formation of filamentous forms (PubMed:20564650).</text>
</comment>
<comment type="biotechnology">
    <text evidence="3 4 5 6 9">MELs not only have high potential as eco-friendly biosurfactants due to their excellent surface activity, but also have attracted considerable recent interest because of thei runique properties, including self-assembly, anti-tumor and cell differentiation induction activities, and moisturizing and hair-repairing properties.</text>
</comment>
<comment type="similarity">
    <text evidence="12">Belongs to the UDP-glycosyltransferase family.</text>
</comment>
<comment type="sequence caution" evidence="12">
    <conflict type="erroneous gene model prediction">
        <sequence resource="EMBL-CDS" id="BAI77915"/>
    </conflict>
</comment>
<feature type="chain" id="PRO_0000449533" description="Erythritol-mannosyl-transferase 1">
    <location>
        <begin position="1"/>
        <end position="617"/>
    </location>
</feature>
<feature type="region of interest" description="Disordered" evidence="2">
    <location>
        <begin position="365"/>
        <end position="396"/>
    </location>
</feature>
<feature type="region of interest" description="Disordered" evidence="2">
    <location>
        <begin position="567"/>
        <end position="617"/>
    </location>
</feature>
<feature type="compositionally biased region" description="Polar residues" evidence="2">
    <location>
        <begin position="371"/>
        <end position="381"/>
    </location>
</feature>
<feature type="compositionally biased region" description="Basic and acidic residues" evidence="2">
    <location>
        <begin position="386"/>
        <end position="396"/>
    </location>
</feature>
<feature type="compositionally biased region" description="Polar residues" evidence="2">
    <location>
        <begin position="578"/>
        <end position="603"/>
    </location>
</feature>
<feature type="sequence conflict" description="In Ref. 2; BAI77915." evidence="12" ref="2">
    <original>M</original>
    <variation>V</variation>
    <location>
        <position position="142"/>
    </location>
</feature>
<feature type="sequence conflict" description="In Ref. 2; BAI77915." evidence="12" ref="2">
    <original>N</original>
    <variation>D</variation>
    <location>
        <position position="184"/>
    </location>
</feature>
<feature type="sequence conflict" description="In Ref. 2; BAI77915." evidence="12" ref="2">
    <original>M</original>
    <variation>I</variation>
    <location>
        <position position="523"/>
    </location>
</feature>
<protein>
    <recommendedName>
        <fullName evidence="10">Erythritol-mannosyl-transferase 1</fullName>
        <ecNumber evidence="1">2.4.1.-</ecNumber>
    </recommendedName>
    <alternativeName>
        <fullName evidence="11">Mannosylerythritol lipids (MELs) biosynthesis cluster protein EMT1</fullName>
    </alternativeName>
</protein>
<evidence type="ECO:0000250" key="1">
    <source>
        <dbReference type="UniProtKB" id="A0A0D1DZV5"/>
    </source>
</evidence>
<evidence type="ECO:0000256" key="2">
    <source>
        <dbReference type="SAM" id="MobiDB-lite"/>
    </source>
</evidence>
<evidence type="ECO:0000269" key="3">
    <source>
    </source>
</evidence>
<evidence type="ECO:0000269" key="4">
    <source>
    </source>
</evidence>
<evidence type="ECO:0000269" key="5">
    <source>
    </source>
</evidence>
<evidence type="ECO:0000269" key="6">
    <source>
    </source>
</evidence>
<evidence type="ECO:0000269" key="7">
    <source>
    </source>
</evidence>
<evidence type="ECO:0000269" key="8">
    <source>
    </source>
</evidence>
<evidence type="ECO:0000269" key="9">
    <source ref="7"/>
</evidence>
<evidence type="ECO:0000303" key="10">
    <source>
    </source>
</evidence>
<evidence type="ECO:0000303" key="11">
    <source>
    </source>
</evidence>
<evidence type="ECO:0000305" key="12"/>
<evidence type="ECO:0000305" key="13">
    <source>
    </source>
</evidence>
<evidence type="ECO:0000305" key="14">
    <source>
    </source>
</evidence>
<proteinExistence type="evidence at protein level"/>
<name>EMT1_PSEA3</name>
<gene>
    <name evidence="10" type="primary">EMT1</name>
    <name type="ORF">PANT_19c00001</name>
</gene>
<dbReference type="EC" id="2.4.1.-" evidence="1"/>
<dbReference type="EMBL" id="AB548311">
    <property type="protein sequence ID" value="BAI77915.1"/>
    <property type="status" value="ALT_SEQ"/>
    <property type="molecule type" value="Genomic_DNA"/>
</dbReference>
<dbReference type="EMBL" id="DF196785">
    <property type="protein sequence ID" value="GAC75887.1"/>
    <property type="molecule type" value="Genomic_DNA"/>
</dbReference>
<dbReference type="STRING" id="1151754.M9MH90"/>
<dbReference type="CAZy" id="GT1">
    <property type="family name" value="Glycosyltransferase Family 1"/>
</dbReference>
<dbReference type="OrthoDB" id="2480at5257"/>
<dbReference type="Proteomes" id="UP000011976">
    <property type="component" value="Unassembled WGS sequence"/>
</dbReference>
<dbReference type="GO" id="GO:0008194">
    <property type="term" value="F:UDP-glycosyltransferase activity"/>
    <property type="evidence" value="ECO:0007669"/>
    <property type="project" value="TreeGrafter"/>
</dbReference>
<dbReference type="Gene3D" id="3.40.50.2000">
    <property type="entry name" value="Glycogen Phosphorylase B"/>
    <property type="match status" value="2"/>
</dbReference>
<dbReference type="InterPro" id="IPR050271">
    <property type="entry name" value="UDP-glycosyltransferase"/>
</dbReference>
<dbReference type="PANTHER" id="PTHR48043">
    <property type="entry name" value="EG:EG0003.4 PROTEIN-RELATED"/>
    <property type="match status" value="1"/>
</dbReference>
<dbReference type="PANTHER" id="PTHR48043:SF151">
    <property type="entry name" value="GLYCOSYLTRANSFERASE FAMILY 1 PROTEIN"/>
    <property type="match status" value="1"/>
</dbReference>
<dbReference type="SUPFAM" id="SSF53756">
    <property type="entry name" value="UDP-Glycosyltransferase/glycogen phosphorylase"/>
    <property type="match status" value="2"/>
</dbReference>